<proteinExistence type="inferred from homology"/>
<sequence>MSTWANLGLQDSASPLMEQLIFFHDHALLILVMITILVGYLMFMLFFNSYINRFLLHGQLIEMIWTILPAIILLFIAMPSLRLLYLLDEINEPSITLKSIGHQWYWSYEYSDFNDIEFDSYMIPTNELSNDGFRLLDVDNRIVLPMNSQIRILVTAADVIHSWTIPALGVKVDGTPGRLNQTNFFINRPGLFYGQCSEICGANHSFMPIVIESVPVNFFIKWIASKVNS</sequence>
<name>COX2_DROBF</name>
<accession>P29859</accession>
<geneLocation type="mitochondrion"/>
<gene>
    <name type="primary">mt:CoII</name>
    <name type="synonym">CoII</name>
</gene>
<comment type="function">
    <text evidence="1">Component of the cytochrome c oxidase, the last enzyme in the mitochondrial electron transport chain which drives oxidative phosphorylation. The respiratory chain contains 3 multisubunit complexes succinate dehydrogenase (complex II, CII), ubiquinol-cytochrome c oxidoreductase (cytochrome b-c1 complex, complex III, CIII) and cytochrome c oxidase (complex IV, CIV), that cooperate to transfer electrons derived from NADH and succinate to molecular oxygen, creating an electrochemical gradient over the inner membrane that drives transmembrane transport and the ATP synthase. Cytochrome c oxidase is the component of the respiratory chain that catalyzes the reduction of oxygen to water. Electrons originating from reduced cytochrome c in the intermembrane space (IMS) are transferred via the dinuclear copper A center (CU(A)) of subunit 2 and heme A of subunit 1 to the active site in subunit 1, a binuclear center (BNC) formed by heme A3 and copper B (CU(B)). The BNC reduces molecular oxygen to 2 water molecules using 4 electrons from cytochrome c in the IMS and 4 protons from the mitochondrial matrix.</text>
</comment>
<comment type="catalytic activity">
    <reaction evidence="1">
        <text>4 Fe(II)-[cytochrome c] + O2 + 8 H(+)(in) = 4 Fe(III)-[cytochrome c] + 2 H2O + 4 H(+)(out)</text>
        <dbReference type="Rhea" id="RHEA:11436"/>
        <dbReference type="Rhea" id="RHEA-COMP:10350"/>
        <dbReference type="Rhea" id="RHEA-COMP:14399"/>
        <dbReference type="ChEBI" id="CHEBI:15377"/>
        <dbReference type="ChEBI" id="CHEBI:15378"/>
        <dbReference type="ChEBI" id="CHEBI:15379"/>
        <dbReference type="ChEBI" id="CHEBI:29033"/>
        <dbReference type="ChEBI" id="CHEBI:29034"/>
        <dbReference type="EC" id="7.1.1.9"/>
    </reaction>
    <physiologicalReaction direction="left-to-right" evidence="1">
        <dbReference type="Rhea" id="RHEA:11437"/>
    </physiologicalReaction>
</comment>
<comment type="cofactor">
    <cofactor evidence="1">
        <name>Cu cation</name>
        <dbReference type="ChEBI" id="CHEBI:23378"/>
    </cofactor>
    <text evidence="1">Binds a dinuclear copper A center per subunit.</text>
</comment>
<comment type="subunit">
    <text evidence="1">Component of the cytochrome c oxidase (complex IV, CIV), a multisubunit enzyme composed of a catalytic core of 3 subunits and several supernumerary subunits. The complex exists as a monomer or a dimer and forms supercomplexes (SCs) in the inner mitochondrial membrane with ubiquinol-cytochrome c oxidoreductase (cytochrome b-c1 complex, complex III, CIII).</text>
</comment>
<comment type="subcellular location">
    <subcellularLocation>
        <location evidence="1">Mitochondrion inner membrane</location>
        <topology evidence="1">Multi-pass membrane protein</topology>
    </subcellularLocation>
</comment>
<comment type="similarity">
    <text evidence="3">Belongs to the cytochrome c oxidase subunit 2 family.</text>
</comment>
<protein>
    <recommendedName>
        <fullName>Cytochrome c oxidase subunit 2</fullName>
        <ecNumber>7.1.1.9</ecNumber>
    </recommendedName>
    <alternativeName>
        <fullName>Cytochrome c oxidase polypeptide II</fullName>
    </alternativeName>
</protein>
<feature type="chain" id="PRO_0000183577" description="Cytochrome c oxidase subunit 2">
    <location>
        <begin position="1"/>
        <end position="229"/>
    </location>
</feature>
<feature type="topological domain" description="Mitochondrial intermembrane" evidence="2">
    <location>
        <begin position="1"/>
        <end position="26"/>
    </location>
</feature>
<feature type="transmembrane region" description="Helical" evidence="2">
    <location>
        <begin position="27"/>
        <end position="48"/>
    </location>
</feature>
<feature type="topological domain" description="Mitochondrial matrix" evidence="2">
    <location>
        <begin position="49"/>
        <end position="62"/>
    </location>
</feature>
<feature type="transmembrane region" description="Helical" evidence="2">
    <location>
        <begin position="63"/>
        <end position="82"/>
    </location>
</feature>
<feature type="topological domain" description="Mitochondrial intermembrane" evidence="2">
    <location>
        <begin position="83"/>
        <end position="229"/>
    </location>
</feature>
<feature type="binding site" evidence="1">
    <location>
        <position position="161"/>
    </location>
    <ligand>
        <name>Cu cation</name>
        <dbReference type="ChEBI" id="CHEBI:23378"/>
        <label>A1</label>
    </ligand>
</feature>
<feature type="binding site" evidence="1">
    <location>
        <position position="196"/>
    </location>
    <ligand>
        <name>Cu cation</name>
        <dbReference type="ChEBI" id="CHEBI:23378"/>
        <label>A1</label>
    </ligand>
</feature>
<feature type="binding site" evidence="1">
    <location>
        <position position="196"/>
    </location>
    <ligand>
        <name>Cu cation</name>
        <dbReference type="ChEBI" id="CHEBI:23378"/>
        <label>A2</label>
    </ligand>
</feature>
<feature type="binding site" evidence="1">
    <location>
        <position position="198"/>
    </location>
    <ligand>
        <name>Cu cation</name>
        <dbReference type="ChEBI" id="CHEBI:23378"/>
        <label>A2</label>
    </ligand>
</feature>
<feature type="binding site" evidence="1">
    <location>
        <position position="198"/>
    </location>
    <ligand>
        <name>Mg(2+)</name>
        <dbReference type="ChEBI" id="CHEBI:18420"/>
        <note>ligand shared with subunit 1</note>
    </ligand>
</feature>
<feature type="binding site" evidence="1">
    <location>
        <position position="200"/>
    </location>
    <ligand>
        <name>Cu cation</name>
        <dbReference type="ChEBI" id="CHEBI:23378"/>
        <label>A1</label>
    </ligand>
</feature>
<feature type="binding site" evidence="1">
    <location>
        <position position="200"/>
    </location>
    <ligand>
        <name>Cu cation</name>
        <dbReference type="ChEBI" id="CHEBI:23378"/>
        <label>A2</label>
    </ligand>
</feature>
<feature type="binding site" evidence="1">
    <location>
        <position position="204"/>
    </location>
    <ligand>
        <name>Cu cation</name>
        <dbReference type="ChEBI" id="CHEBI:23378"/>
        <label>A2</label>
    </ligand>
</feature>
<feature type="binding site" evidence="1">
    <location>
        <position position="207"/>
    </location>
    <ligand>
        <name>Cu cation</name>
        <dbReference type="ChEBI" id="CHEBI:23378"/>
        <label>A1</label>
    </ligand>
</feature>
<organism>
    <name type="scientific">Drosophila bifasciata</name>
    <name type="common">Fruit fly</name>
    <dbReference type="NCBI Taxonomy" id="7218"/>
    <lineage>
        <taxon>Eukaryota</taxon>
        <taxon>Metazoa</taxon>
        <taxon>Ecdysozoa</taxon>
        <taxon>Arthropoda</taxon>
        <taxon>Hexapoda</taxon>
        <taxon>Insecta</taxon>
        <taxon>Pterygota</taxon>
        <taxon>Neoptera</taxon>
        <taxon>Endopterygota</taxon>
        <taxon>Diptera</taxon>
        <taxon>Brachycera</taxon>
        <taxon>Muscomorpha</taxon>
        <taxon>Ephydroidea</taxon>
        <taxon>Drosophilidae</taxon>
        <taxon>Drosophila</taxon>
        <taxon>Sophophora</taxon>
    </lineage>
</organism>
<dbReference type="EC" id="7.1.1.9"/>
<dbReference type="EMBL" id="M95147">
    <property type="protein sequence ID" value="AAA02777.2"/>
    <property type="molecule type" value="Genomic_DNA"/>
</dbReference>
<dbReference type="SMR" id="P29859"/>
<dbReference type="GO" id="GO:0005743">
    <property type="term" value="C:mitochondrial inner membrane"/>
    <property type="evidence" value="ECO:0007669"/>
    <property type="project" value="UniProtKB-SubCell"/>
</dbReference>
<dbReference type="GO" id="GO:0005507">
    <property type="term" value="F:copper ion binding"/>
    <property type="evidence" value="ECO:0007669"/>
    <property type="project" value="InterPro"/>
</dbReference>
<dbReference type="GO" id="GO:0004129">
    <property type="term" value="F:cytochrome-c oxidase activity"/>
    <property type="evidence" value="ECO:0007669"/>
    <property type="project" value="UniProtKB-EC"/>
</dbReference>
<dbReference type="GO" id="GO:0042773">
    <property type="term" value="P:ATP synthesis coupled electron transport"/>
    <property type="evidence" value="ECO:0007669"/>
    <property type="project" value="TreeGrafter"/>
</dbReference>
<dbReference type="CDD" id="cd13912">
    <property type="entry name" value="CcO_II_C"/>
    <property type="match status" value="1"/>
</dbReference>
<dbReference type="FunFam" id="1.10.287.90:FF:000006">
    <property type="entry name" value="Cytochrome c oxidase subunit 2"/>
    <property type="match status" value="1"/>
</dbReference>
<dbReference type="FunFam" id="2.60.40.420:FF:000001">
    <property type="entry name" value="Cytochrome c oxidase subunit 2"/>
    <property type="match status" value="1"/>
</dbReference>
<dbReference type="Gene3D" id="1.10.287.90">
    <property type="match status" value="1"/>
</dbReference>
<dbReference type="Gene3D" id="2.60.40.420">
    <property type="entry name" value="Cupredoxins - blue copper proteins"/>
    <property type="match status" value="1"/>
</dbReference>
<dbReference type="InterPro" id="IPR045187">
    <property type="entry name" value="CcO_II"/>
</dbReference>
<dbReference type="InterPro" id="IPR002429">
    <property type="entry name" value="CcO_II-like_C"/>
</dbReference>
<dbReference type="InterPro" id="IPR034210">
    <property type="entry name" value="CcO_II_C"/>
</dbReference>
<dbReference type="InterPro" id="IPR001505">
    <property type="entry name" value="Copper_CuA"/>
</dbReference>
<dbReference type="InterPro" id="IPR008972">
    <property type="entry name" value="Cupredoxin"/>
</dbReference>
<dbReference type="InterPro" id="IPR014222">
    <property type="entry name" value="Cyt_c_oxidase_su2"/>
</dbReference>
<dbReference type="InterPro" id="IPR011759">
    <property type="entry name" value="Cyt_c_oxidase_su2_TM_dom"/>
</dbReference>
<dbReference type="InterPro" id="IPR036257">
    <property type="entry name" value="Cyt_c_oxidase_su2_TM_sf"/>
</dbReference>
<dbReference type="NCBIfam" id="TIGR02866">
    <property type="entry name" value="CoxB"/>
    <property type="match status" value="1"/>
</dbReference>
<dbReference type="PANTHER" id="PTHR22888:SF9">
    <property type="entry name" value="CYTOCHROME C OXIDASE SUBUNIT 2"/>
    <property type="match status" value="1"/>
</dbReference>
<dbReference type="PANTHER" id="PTHR22888">
    <property type="entry name" value="CYTOCHROME C OXIDASE, SUBUNIT II"/>
    <property type="match status" value="1"/>
</dbReference>
<dbReference type="Pfam" id="PF00116">
    <property type="entry name" value="COX2"/>
    <property type="match status" value="1"/>
</dbReference>
<dbReference type="Pfam" id="PF02790">
    <property type="entry name" value="COX2_TM"/>
    <property type="match status" value="1"/>
</dbReference>
<dbReference type="PRINTS" id="PR01166">
    <property type="entry name" value="CYCOXIDASEII"/>
</dbReference>
<dbReference type="SUPFAM" id="SSF49503">
    <property type="entry name" value="Cupredoxins"/>
    <property type="match status" value="1"/>
</dbReference>
<dbReference type="SUPFAM" id="SSF81464">
    <property type="entry name" value="Cytochrome c oxidase subunit II-like, transmembrane region"/>
    <property type="match status" value="1"/>
</dbReference>
<dbReference type="PROSITE" id="PS00078">
    <property type="entry name" value="COX2"/>
    <property type="match status" value="1"/>
</dbReference>
<dbReference type="PROSITE" id="PS50857">
    <property type="entry name" value="COX2_CUA"/>
    <property type="match status" value="1"/>
</dbReference>
<dbReference type="PROSITE" id="PS50999">
    <property type="entry name" value="COX2_TM"/>
    <property type="match status" value="1"/>
</dbReference>
<keyword id="KW-0186">Copper</keyword>
<keyword id="KW-0249">Electron transport</keyword>
<keyword id="KW-0460">Magnesium</keyword>
<keyword id="KW-0472">Membrane</keyword>
<keyword id="KW-0479">Metal-binding</keyword>
<keyword id="KW-0496">Mitochondrion</keyword>
<keyword id="KW-0999">Mitochondrion inner membrane</keyword>
<keyword id="KW-0679">Respiratory chain</keyword>
<keyword id="KW-1278">Translocase</keyword>
<keyword id="KW-0812">Transmembrane</keyword>
<keyword id="KW-1133">Transmembrane helix</keyword>
<keyword id="KW-0813">Transport</keyword>
<reference key="1">
    <citation type="journal article" date="1993" name="Mol. Biol. Evol.">
        <title>Relationships in the Drosophila obscura species group, inferred from mitochondrial cytochrome oxidase II sequences.</title>
        <authorList>
            <person name="Beckenbach A.T."/>
            <person name="Wei Y.W."/>
            <person name="Liu H."/>
        </authorList>
    </citation>
    <scope>NUCLEOTIDE SEQUENCE [GENOMIC DNA]</scope>
</reference>
<evidence type="ECO:0000250" key="1">
    <source>
        <dbReference type="UniProtKB" id="P00410"/>
    </source>
</evidence>
<evidence type="ECO:0000255" key="2"/>
<evidence type="ECO:0000305" key="3"/>